<protein>
    <recommendedName>
        <fullName>Ankyrin repeat domain-containing protein 1</fullName>
    </recommendedName>
    <alternativeName>
        <fullName>Cardiac adriamycin-responsive protein</fullName>
    </alternativeName>
    <alternativeName>
        <fullName>Cardiac ankyrin repeat protein</fullName>
    </alternativeName>
</protein>
<sequence>MMVFRVEELVTGKKNSNGSSGEFLPGEFRNGEYEAAVALEKQEDLKTLPANSVNLGEEQRKSEKVREAELKKKKLEQRSKLENLEDLEIIVQLKKRKKYKKTKVPVVKEPEPEIITEPVDVPRFLKAALENKLPVVEKFLSDKNSPDVCDEYKRTALHRACLEGHLAIVEKLMEAGAQIEFRDMLESTAIHWACRGGNLDVLKLLLNKGAKISARDKLLSTALHVAVRTGHYECAEHLIACEADLNAKDREGDTPLHDAVRLNRYKMIRLLMTFGADLNVKNCAGKTPMDLVLHWQNGTKAIFDSLKENAYKNSRIATF</sequence>
<keyword id="KW-0040">ANK repeat</keyword>
<keyword id="KW-0175">Coiled coil</keyword>
<keyword id="KW-0539">Nucleus</keyword>
<keyword id="KW-1185">Reference proteome</keyword>
<keyword id="KW-0677">Repeat</keyword>
<comment type="function">
    <text evidence="3 4">May play an important role in endothelial cell activation. May act as a nuclear transcription factor that negatively regulates the expression of cardiac genes.</text>
</comment>
<comment type="subunit">
    <text evidence="1 3">Interacts with TTN/titin (By similarity). Interacts with YBX1.</text>
</comment>
<comment type="interaction">
    <interactant intactId="EBI-10817505">
        <id>Q8R560</id>
    </interactant>
    <interactant intactId="EBI-10769071">
        <id>Q5VU43-11</id>
        <label>PDE4DIP</label>
    </interactant>
    <organismsDiffer>true</organismsDiffer>
    <experiments>2</experiments>
</comment>
<comment type="subcellular location">
    <subcellularLocation>
        <location evidence="3 4">Nucleus</location>
    </subcellularLocation>
</comment>
<comment type="tissue specificity">
    <text evidence="3">Expressed in heart, cardiac muscle.</text>
</comment>
<comment type="induction">
    <text evidence="4">Down-regulated by doxorubicin (adriamycin), in vitro.</text>
</comment>
<gene>
    <name type="primary">Ankrd1</name>
    <name type="synonym">Carp</name>
</gene>
<feature type="chain" id="PRO_0000240483" description="Ankyrin repeat domain-containing protein 1">
    <location>
        <begin position="1"/>
        <end position="319"/>
    </location>
</feature>
<feature type="repeat" description="ANK 1">
    <location>
        <begin position="152"/>
        <end position="181"/>
    </location>
</feature>
<feature type="repeat" description="ANK 2">
    <location>
        <begin position="185"/>
        <end position="214"/>
    </location>
</feature>
<feature type="repeat" description="ANK 3">
    <location>
        <begin position="218"/>
        <end position="247"/>
    </location>
</feature>
<feature type="repeat" description="ANK 4">
    <location>
        <begin position="251"/>
        <end position="280"/>
    </location>
</feature>
<feature type="repeat" description="ANK 5">
    <location>
        <begin position="284"/>
        <end position="315"/>
    </location>
</feature>
<feature type="coiled-coil region" evidence="2">
    <location>
        <begin position="55"/>
        <end position="89"/>
    </location>
</feature>
<feature type="sequence conflict" description="In Ref. 2; AAD10401." evidence="5" ref="2">
    <original>T</original>
    <variation>I</variation>
    <location>
        <position position="287"/>
    </location>
</feature>
<organism>
    <name type="scientific">Rattus norvegicus</name>
    <name type="common">Rat</name>
    <dbReference type="NCBI Taxonomy" id="10116"/>
    <lineage>
        <taxon>Eukaryota</taxon>
        <taxon>Metazoa</taxon>
        <taxon>Chordata</taxon>
        <taxon>Craniata</taxon>
        <taxon>Vertebrata</taxon>
        <taxon>Euteleostomi</taxon>
        <taxon>Mammalia</taxon>
        <taxon>Eutheria</taxon>
        <taxon>Euarchontoglires</taxon>
        <taxon>Glires</taxon>
        <taxon>Rodentia</taxon>
        <taxon>Myomorpha</taxon>
        <taxon>Muroidea</taxon>
        <taxon>Muridae</taxon>
        <taxon>Murinae</taxon>
        <taxon>Rattus</taxon>
    </lineage>
</organism>
<accession>Q8R560</accession>
<accession>Q9Z1F0</accession>
<reference key="1">
    <citation type="journal article" date="1997" name="Development">
        <title>CARP, a cardiac ankyrin repeat protein, is downstream in the Nkx2-5 homeobox gene pathway.</title>
        <authorList>
            <person name="Zou Y."/>
            <person name="Evans S."/>
            <person name="Chen J."/>
            <person name="Kuo H.-C."/>
            <person name="Harvey R.P."/>
            <person name="Chien K.R."/>
        </authorList>
    </citation>
    <scope>NUCLEOTIDE SEQUENCE [MRNA]</scope>
    <scope>INTERACTION WITH YBX1</scope>
    <scope>SUBCELLULAR LOCATION</scope>
    <scope>FUNCTION</scope>
    <scope>TISSUE SPECIFICITY</scope>
    <source>
        <tissue>Heart</tissue>
    </source>
</reference>
<reference key="2">
    <citation type="journal article" date="1997" name="J. Biol. Chem.">
        <title>A novel cardiac-restricted target for doxorubicin. CARP, a nuclear modulator of gene expression in cardiac progenitor cells and cardiomyocytes.</title>
        <authorList>
            <person name="Jeyaseelan R."/>
            <person name="Poizat C."/>
            <person name="Baker R.K."/>
            <person name="Abdishoo S."/>
            <person name="Isterabadi L.B."/>
            <person name="Lyons G.E."/>
            <person name="Kedes L."/>
        </authorList>
    </citation>
    <scope>NUCLEOTIDE SEQUENCE [MRNA]</scope>
    <scope>INDUCTION BY DOXORUBICIN</scope>
    <scope>SUBCELLULAR LOCATION</scope>
    <scope>FUNCTION</scope>
    <source>
        <strain>Sprague-Dawley</strain>
    </source>
</reference>
<reference key="3">
    <citation type="journal article" date="2004" name="Genome Res.">
        <title>The status, quality, and expansion of the NIH full-length cDNA project: the Mammalian Gene Collection (MGC).</title>
        <authorList>
            <consortium name="The MGC Project Team"/>
        </authorList>
    </citation>
    <scope>NUCLEOTIDE SEQUENCE [LARGE SCALE MRNA]</scope>
    <source>
        <tissue>Heart</tissue>
    </source>
</reference>
<proteinExistence type="evidence at protein level"/>
<evidence type="ECO:0000250" key="1"/>
<evidence type="ECO:0000255" key="2"/>
<evidence type="ECO:0000269" key="3">
    <source>
    </source>
</evidence>
<evidence type="ECO:0000269" key="4">
    <source>
    </source>
</evidence>
<evidence type="ECO:0000305" key="5"/>
<name>ANKR1_RAT</name>
<dbReference type="EMBL" id="L81174">
    <property type="protein sequence ID" value="AAL77519.1"/>
    <property type="molecule type" value="mRNA"/>
</dbReference>
<dbReference type="EMBL" id="U50736">
    <property type="protein sequence ID" value="AAD10401.1"/>
    <property type="molecule type" value="mRNA"/>
</dbReference>
<dbReference type="EMBL" id="BC072699">
    <property type="protein sequence ID" value="AAH72699.1"/>
    <property type="molecule type" value="mRNA"/>
</dbReference>
<dbReference type="RefSeq" id="NP_037352.2">
    <property type="nucleotide sequence ID" value="NM_013220.2"/>
</dbReference>
<dbReference type="SMR" id="Q8R560"/>
<dbReference type="FunCoup" id="Q8R560">
    <property type="interactions" value="71"/>
</dbReference>
<dbReference type="IntAct" id="Q8R560">
    <property type="interactions" value="1"/>
</dbReference>
<dbReference type="STRING" id="10116.ENSRNOP00000025258"/>
<dbReference type="PhosphoSitePlus" id="Q8R560"/>
<dbReference type="PaxDb" id="10116-ENSRNOP00000025258"/>
<dbReference type="Ensembl" id="ENSRNOT00000108356.1">
    <property type="protein sequence ID" value="ENSRNOP00000083877.1"/>
    <property type="gene ID" value="ENSRNOG00000018598.7"/>
</dbReference>
<dbReference type="GeneID" id="27064"/>
<dbReference type="KEGG" id="rno:27064"/>
<dbReference type="UCSC" id="RGD:61989">
    <property type="organism name" value="rat"/>
</dbReference>
<dbReference type="AGR" id="RGD:61989"/>
<dbReference type="CTD" id="27063"/>
<dbReference type="RGD" id="61989">
    <property type="gene designation" value="Ankrd1"/>
</dbReference>
<dbReference type="eggNOG" id="KOG0504">
    <property type="taxonomic scope" value="Eukaryota"/>
</dbReference>
<dbReference type="GeneTree" id="ENSGT00940000153956"/>
<dbReference type="HOGENOM" id="CLU_000134_11_1_1"/>
<dbReference type="InParanoid" id="Q8R560"/>
<dbReference type="PhylomeDB" id="Q8R560"/>
<dbReference type="TreeFam" id="TF331650"/>
<dbReference type="PRO" id="PR:Q8R560"/>
<dbReference type="Proteomes" id="UP000002494">
    <property type="component" value="Chromosome 1"/>
</dbReference>
<dbReference type="Bgee" id="ENSRNOG00000018598">
    <property type="expression patterns" value="Expressed in heart and 17 other cell types or tissues"/>
</dbReference>
<dbReference type="GO" id="GO:0005737">
    <property type="term" value="C:cytoplasm"/>
    <property type="evidence" value="ECO:0000266"/>
    <property type="project" value="RGD"/>
</dbReference>
<dbReference type="GO" id="GO:0005829">
    <property type="term" value="C:cytosol"/>
    <property type="evidence" value="ECO:0000266"/>
    <property type="project" value="RGD"/>
</dbReference>
<dbReference type="GO" id="GO:0001650">
    <property type="term" value="C:fibrillar center"/>
    <property type="evidence" value="ECO:0007669"/>
    <property type="project" value="Ensembl"/>
</dbReference>
<dbReference type="GO" id="GO:0031674">
    <property type="term" value="C:I band"/>
    <property type="evidence" value="ECO:0000314"/>
    <property type="project" value="BHF-UCL"/>
</dbReference>
<dbReference type="GO" id="GO:0030016">
    <property type="term" value="C:myofibril"/>
    <property type="evidence" value="ECO:0000266"/>
    <property type="project" value="RGD"/>
</dbReference>
<dbReference type="GO" id="GO:0005654">
    <property type="term" value="C:nucleoplasm"/>
    <property type="evidence" value="ECO:0007669"/>
    <property type="project" value="Ensembl"/>
</dbReference>
<dbReference type="GO" id="GO:0005634">
    <property type="term" value="C:nucleus"/>
    <property type="evidence" value="ECO:0000314"/>
    <property type="project" value="BHF-UCL"/>
</dbReference>
<dbReference type="GO" id="GO:0048471">
    <property type="term" value="C:perinuclear region of cytoplasm"/>
    <property type="evidence" value="ECO:0000266"/>
    <property type="project" value="RGD"/>
</dbReference>
<dbReference type="GO" id="GO:0032991">
    <property type="term" value="C:protein-containing complex"/>
    <property type="evidence" value="ECO:0000266"/>
    <property type="project" value="RGD"/>
</dbReference>
<dbReference type="GO" id="GO:0005667">
    <property type="term" value="C:transcription regulator complex"/>
    <property type="evidence" value="ECO:0000266"/>
    <property type="project" value="RGD"/>
</dbReference>
<dbReference type="GO" id="GO:0003779">
    <property type="term" value="F:actin binding"/>
    <property type="evidence" value="ECO:0000266"/>
    <property type="project" value="RGD"/>
</dbReference>
<dbReference type="GO" id="GO:0003677">
    <property type="term" value="F:DNA binding"/>
    <property type="evidence" value="ECO:0000266"/>
    <property type="project" value="RGD"/>
</dbReference>
<dbReference type="GO" id="GO:0042826">
    <property type="term" value="F:histone deacetylase binding"/>
    <property type="evidence" value="ECO:0000266"/>
    <property type="project" value="RGD"/>
</dbReference>
<dbReference type="GO" id="GO:0002039">
    <property type="term" value="F:p53 binding"/>
    <property type="evidence" value="ECO:0000266"/>
    <property type="project" value="RGD"/>
</dbReference>
<dbReference type="GO" id="GO:0070412">
    <property type="term" value="F:R-SMAD binding"/>
    <property type="evidence" value="ECO:0000266"/>
    <property type="project" value="RGD"/>
</dbReference>
<dbReference type="GO" id="GO:0061629">
    <property type="term" value="F:RNA polymerase II-specific DNA-binding transcription factor binding"/>
    <property type="evidence" value="ECO:0000266"/>
    <property type="project" value="RGD"/>
</dbReference>
<dbReference type="GO" id="GO:0031432">
    <property type="term" value="F:titin binding"/>
    <property type="evidence" value="ECO:0000266"/>
    <property type="project" value="RGD"/>
</dbReference>
<dbReference type="GO" id="GO:0003713">
    <property type="term" value="F:transcription coactivator activity"/>
    <property type="evidence" value="ECO:0000266"/>
    <property type="project" value="RGD"/>
</dbReference>
<dbReference type="GO" id="GO:0003712">
    <property type="term" value="F:transcription coregulator activity"/>
    <property type="evidence" value="ECO:0000304"/>
    <property type="project" value="RGD"/>
</dbReference>
<dbReference type="GO" id="GO:0003714">
    <property type="term" value="F:transcription corepressor activity"/>
    <property type="evidence" value="ECO:0000266"/>
    <property type="project" value="RGD"/>
</dbReference>
<dbReference type="GO" id="GO:0055008">
    <property type="term" value="P:cardiac muscle tissue morphogenesis"/>
    <property type="evidence" value="ECO:0000266"/>
    <property type="project" value="RGD"/>
</dbReference>
<dbReference type="GO" id="GO:0071456">
    <property type="term" value="P:cellular response to hypoxia"/>
    <property type="evidence" value="ECO:0000270"/>
    <property type="project" value="RGD"/>
</dbReference>
<dbReference type="GO" id="GO:0071347">
    <property type="term" value="P:cellular response to interleukin-1"/>
    <property type="evidence" value="ECO:0000266"/>
    <property type="project" value="RGD"/>
</dbReference>
<dbReference type="GO" id="GO:0071222">
    <property type="term" value="P:cellular response to lipopolysaccharide"/>
    <property type="evidence" value="ECO:0000266"/>
    <property type="project" value="RGD"/>
</dbReference>
<dbReference type="GO" id="GO:0071260">
    <property type="term" value="P:cellular response to mechanical stimulus"/>
    <property type="evidence" value="ECO:0000266"/>
    <property type="project" value="RGD"/>
</dbReference>
<dbReference type="GO" id="GO:0071560">
    <property type="term" value="P:cellular response to transforming growth factor beta stimulus"/>
    <property type="evidence" value="ECO:0000266"/>
    <property type="project" value="RGD"/>
</dbReference>
<dbReference type="GO" id="GO:0071356">
    <property type="term" value="P:cellular response to tumor necrosis factor"/>
    <property type="evidence" value="ECO:0000266"/>
    <property type="project" value="RGD"/>
</dbReference>
<dbReference type="GO" id="GO:0071466">
    <property type="term" value="P:cellular response to xenobiotic stimulus"/>
    <property type="evidence" value="ECO:0000266"/>
    <property type="project" value="RGD"/>
</dbReference>
<dbReference type="GO" id="GO:2000279">
    <property type="term" value="P:negative regulation of DNA biosynthetic process"/>
    <property type="evidence" value="ECO:0000266"/>
    <property type="project" value="RGD"/>
</dbReference>
<dbReference type="GO" id="GO:0045892">
    <property type="term" value="P:negative regulation of DNA-templated transcription"/>
    <property type="evidence" value="ECO:0000304"/>
    <property type="project" value="RGD"/>
</dbReference>
<dbReference type="GO" id="GO:0000122">
    <property type="term" value="P:negative regulation of transcription by RNA polymerase II"/>
    <property type="evidence" value="ECO:0000314"/>
    <property type="project" value="RGD"/>
</dbReference>
<dbReference type="GO" id="GO:0141212">
    <property type="term" value="P:phospholipase C/protein kinase C signal transduction"/>
    <property type="evidence" value="ECO:0000266"/>
    <property type="project" value="RGD"/>
</dbReference>
<dbReference type="GO" id="GO:0043065">
    <property type="term" value="P:positive regulation of apoptotic process"/>
    <property type="evidence" value="ECO:0000266"/>
    <property type="project" value="RGD"/>
</dbReference>
<dbReference type="GO" id="GO:0043517">
    <property type="term" value="P:positive regulation of DNA damage response, signal transduction by p53 class mediator"/>
    <property type="evidence" value="ECO:0000266"/>
    <property type="project" value="RGD"/>
</dbReference>
<dbReference type="GO" id="GO:0010976">
    <property type="term" value="P:positive regulation of neuron projection development"/>
    <property type="evidence" value="ECO:0000315"/>
    <property type="project" value="RGD"/>
</dbReference>
<dbReference type="GO" id="GO:0050714">
    <property type="term" value="P:positive regulation of protein secretion"/>
    <property type="evidence" value="ECO:0000266"/>
    <property type="project" value="RGD"/>
</dbReference>
<dbReference type="GO" id="GO:0006357">
    <property type="term" value="P:regulation of transcription by RNA polymerase II"/>
    <property type="evidence" value="ECO:0000266"/>
    <property type="project" value="RGD"/>
</dbReference>
<dbReference type="GO" id="GO:0035994">
    <property type="term" value="P:response to muscle stretch"/>
    <property type="evidence" value="ECO:0000266"/>
    <property type="project" value="RGD"/>
</dbReference>
<dbReference type="GO" id="GO:0035914">
    <property type="term" value="P:skeletal muscle cell differentiation"/>
    <property type="evidence" value="ECO:0000266"/>
    <property type="project" value="RGD"/>
</dbReference>
<dbReference type="FunFam" id="1.25.40.20:FF:000111">
    <property type="entry name" value="Ankyrin repeat domain-containing protein 1"/>
    <property type="match status" value="1"/>
</dbReference>
<dbReference type="FunFam" id="1.25.40.20:FF:000369">
    <property type="entry name" value="Ankyrin repeat domain-containing protein 1"/>
    <property type="match status" value="1"/>
</dbReference>
<dbReference type="Gene3D" id="1.25.40.20">
    <property type="entry name" value="Ankyrin repeat-containing domain"/>
    <property type="match status" value="2"/>
</dbReference>
<dbReference type="InterPro" id="IPR002110">
    <property type="entry name" value="Ankyrin_rpt"/>
</dbReference>
<dbReference type="InterPro" id="IPR036770">
    <property type="entry name" value="Ankyrin_rpt-contain_sf"/>
</dbReference>
<dbReference type="PANTHER" id="PTHR24126:SF7">
    <property type="entry name" value="ANKYRIN REPEAT DOMAIN-CONTAINING PROTEIN 1"/>
    <property type="match status" value="1"/>
</dbReference>
<dbReference type="PANTHER" id="PTHR24126">
    <property type="entry name" value="ANKYRIN REPEAT, PH AND SEC7 DOMAIN CONTAINING PROTEIN SECG-RELATED"/>
    <property type="match status" value="1"/>
</dbReference>
<dbReference type="Pfam" id="PF12796">
    <property type="entry name" value="Ank_2"/>
    <property type="match status" value="2"/>
</dbReference>
<dbReference type="PRINTS" id="PR01415">
    <property type="entry name" value="ANKYRIN"/>
</dbReference>
<dbReference type="SMART" id="SM00248">
    <property type="entry name" value="ANK"/>
    <property type="match status" value="4"/>
</dbReference>
<dbReference type="SUPFAM" id="SSF48403">
    <property type="entry name" value="Ankyrin repeat"/>
    <property type="match status" value="1"/>
</dbReference>
<dbReference type="PROSITE" id="PS50297">
    <property type="entry name" value="ANK_REP_REGION"/>
    <property type="match status" value="1"/>
</dbReference>
<dbReference type="PROSITE" id="PS50088">
    <property type="entry name" value="ANK_REPEAT"/>
    <property type="match status" value="4"/>
</dbReference>